<dbReference type="EMBL" id="CP000703">
    <property type="protein sequence ID" value="ABQ48508.1"/>
    <property type="molecule type" value="Genomic_DNA"/>
</dbReference>
<dbReference type="RefSeq" id="WP_000148826.1">
    <property type="nucleotide sequence ID" value="NC_009487.1"/>
</dbReference>
<dbReference type="SMR" id="A5IQN5"/>
<dbReference type="KEGG" id="saj:SaurJH9_0705"/>
<dbReference type="HOGENOM" id="CLU_106619_0_0_9"/>
<dbReference type="HAMAP" id="MF_00489">
    <property type="entry name" value="UPF0178"/>
    <property type="match status" value="1"/>
</dbReference>
<dbReference type="InterPro" id="IPR003791">
    <property type="entry name" value="UPF0178"/>
</dbReference>
<dbReference type="NCBIfam" id="NF001095">
    <property type="entry name" value="PRK00124.1"/>
    <property type="match status" value="1"/>
</dbReference>
<dbReference type="PANTHER" id="PTHR35146">
    <property type="entry name" value="UPF0178 PROTEIN YAII"/>
    <property type="match status" value="1"/>
</dbReference>
<dbReference type="PANTHER" id="PTHR35146:SF1">
    <property type="entry name" value="UPF0178 PROTEIN YAII"/>
    <property type="match status" value="1"/>
</dbReference>
<dbReference type="Pfam" id="PF02639">
    <property type="entry name" value="DUF188"/>
    <property type="match status" value="1"/>
</dbReference>
<comment type="similarity">
    <text evidence="1">Belongs to the UPF0178 family.</text>
</comment>
<proteinExistence type="inferred from homology"/>
<sequence>MTHIIIDGDACPVVDSIIDLTTETGIFVTIIRSFSHFSNQLYPPHVSTLYVDDGPDAVDYKIVQLSTKDDIVVTQDYGLASLLVDKVLIVMHHNGKIYNSKNIQQLLDKRYINAQIRKQGGRHKGPPPFTKQDQKVFEQSLLKVIHRIKELD</sequence>
<protein>
    <recommendedName>
        <fullName evidence="1">UPF0178 protein SaurJH9_0705</fullName>
    </recommendedName>
</protein>
<name>Y705_STAA9</name>
<reference key="1">
    <citation type="submission" date="2007-05" db="EMBL/GenBank/DDBJ databases">
        <title>Complete sequence of chromosome of Staphylococcus aureus subsp. aureus JH9.</title>
        <authorList>
            <consortium name="US DOE Joint Genome Institute"/>
            <person name="Copeland A."/>
            <person name="Lucas S."/>
            <person name="Lapidus A."/>
            <person name="Barry K."/>
            <person name="Detter J.C."/>
            <person name="Glavina del Rio T."/>
            <person name="Hammon N."/>
            <person name="Israni S."/>
            <person name="Pitluck S."/>
            <person name="Chain P."/>
            <person name="Malfatti S."/>
            <person name="Shin M."/>
            <person name="Vergez L."/>
            <person name="Schmutz J."/>
            <person name="Larimer F."/>
            <person name="Land M."/>
            <person name="Hauser L."/>
            <person name="Kyrpides N."/>
            <person name="Kim E."/>
            <person name="Tomasz A."/>
            <person name="Richardson P."/>
        </authorList>
    </citation>
    <scope>NUCLEOTIDE SEQUENCE [LARGE SCALE GENOMIC DNA]</scope>
    <source>
        <strain>JH9</strain>
    </source>
</reference>
<gene>
    <name type="ordered locus">SaurJH9_0705</name>
</gene>
<accession>A5IQN5</accession>
<organism>
    <name type="scientific">Staphylococcus aureus (strain JH9)</name>
    <dbReference type="NCBI Taxonomy" id="359786"/>
    <lineage>
        <taxon>Bacteria</taxon>
        <taxon>Bacillati</taxon>
        <taxon>Bacillota</taxon>
        <taxon>Bacilli</taxon>
        <taxon>Bacillales</taxon>
        <taxon>Staphylococcaceae</taxon>
        <taxon>Staphylococcus</taxon>
    </lineage>
</organism>
<evidence type="ECO:0000255" key="1">
    <source>
        <dbReference type="HAMAP-Rule" id="MF_00489"/>
    </source>
</evidence>
<feature type="chain" id="PRO_1000081389" description="UPF0178 protein SaurJH9_0705">
    <location>
        <begin position="1"/>
        <end position="152"/>
    </location>
</feature>